<proteinExistence type="inferred from homology"/>
<feature type="chain" id="PRO_1000124315" description="Ketol-acid reductoisomerase (NADP(+))">
    <location>
        <begin position="1"/>
        <end position="339"/>
    </location>
</feature>
<feature type="domain" description="KARI N-terminal Rossmann" evidence="2">
    <location>
        <begin position="1"/>
        <end position="182"/>
    </location>
</feature>
<feature type="domain" description="KARI C-terminal knotted" evidence="3">
    <location>
        <begin position="183"/>
        <end position="328"/>
    </location>
</feature>
<feature type="active site" evidence="1">
    <location>
        <position position="108"/>
    </location>
</feature>
<feature type="binding site" evidence="1">
    <location>
        <begin position="24"/>
        <end position="27"/>
    </location>
    <ligand>
        <name>NADP(+)</name>
        <dbReference type="ChEBI" id="CHEBI:58349"/>
    </ligand>
</feature>
<feature type="binding site" evidence="1">
    <location>
        <position position="48"/>
    </location>
    <ligand>
        <name>NADP(+)</name>
        <dbReference type="ChEBI" id="CHEBI:58349"/>
    </ligand>
</feature>
<feature type="binding site" evidence="1">
    <location>
        <position position="51"/>
    </location>
    <ligand>
        <name>NADP(+)</name>
        <dbReference type="ChEBI" id="CHEBI:58349"/>
    </ligand>
</feature>
<feature type="binding site" evidence="1">
    <location>
        <position position="53"/>
    </location>
    <ligand>
        <name>NADP(+)</name>
        <dbReference type="ChEBI" id="CHEBI:58349"/>
    </ligand>
</feature>
<feature type="binding site" evidence="1">
    <location>
        <begin position="83"/>
        <end position="86"/>
    </location>
    <ligand>
        <name>NADP(+)</name>
        <dbReference type="ChEBI" id="CHEBI:58349"/>
    </ligand>
</feature>
<feature type="binding site" evidence="1">
    <location>
        <position position="134"/>
    </location>
    <ligand>
        <name>NADP(+)</name>
        <dbReference type="ChEBI" id="CHEBI:58349"/>
    </ligand>
</feature>
<feature type="binding site" evidence="1">
    <location>
        <position position="191"/>
    </location>
    <ligand>
        <name>Mg(2+)</name>
        <dbReference type="ChEBI" id="CHEBI:18420"/>
        <label>1</label>
    </ligand>
</feature>
<feature type="binding site" evidence="1">
    <location>
        <position position="191"/>
    </location>
    <ligand>
        <name>Mg(2+)</name>
        <dbReference type="ChEBI" id="CHEBI:18420"/>
        <label>2</label>
    </ligand>
</feature>
<feature type="binding site" evidence="1">
    <location>
        <position position="195"/>
    </location>
    <ligand>
        <name>Mg(2+)</name>
        <dbReference type="ChEBI" id="CHEBI:18420"/>
        <label>1</label>
    </ligand>
</feature>
<feature type="binding site" evidence="1">
    <location>
        <position position="227"/>
    </location>
    <ligand>
        <name>Mg(2+)</name>
        <dbReference type="ChEBI" id="CHEBI:18420"/>
        <label>2</label>
    </ligand>
</feature>
<feature type="binding site" evidence="1">
    <location>
        <position position="231"/>
    </location>
    <ligand>
        <name>Mg(2+)</name>
        <dbReference type="ChEBI" id="CHEBI:18420"/>
        <label>2</label>
    </ligand>
</feature>
<feature type="binding site" evidence="1">
    <location>
        <position position="252"/>
    </location>
    <ligand>
        <name>substrate</name>
    </ligand>
</feature>
<name>ILVC_AFIC5</name>
<reference key="1">
    <citation type="journal article" date="2008" name="J. Bacteriol.">
        <title>Genome sequence of the chemolithoautotrophic bacterium Oligotropha carboxidovorans OM5T.</title>
        <authorList>
            <person name="Paul D."/>
            <person name="Bridges S."/>
            <person name="Burgess S.C."/>
            <person name="Dandass Y."/>
            <person name="Lawrence M.L."/>
        </authorList>
    </citation>
    <scope>NUCLEOTIDE SEQUENCE [LARGE SCALE GENOMIC DNA]</scope>
    <source>
        <strain>ATCC 49405 / DSM 1227 / KCTC 32145 / OM5</strain>
    </source>
</reference>
<reference key="2">
    <citation type="journal article" date="2011" name="J. Bacteriol.">
        <title>Complete genome sequences of the chemolithoautotrophic Oligotropha carboxidovorans strains OM4 and OM5.</title>
        <authorList>
            <person name="Volland S."/>
            <person name="Rachinger M."/>
            <person name="Strittmatter A."/>
            <person name="Daniel R."/>
            <person name="Gottschalk G."/>
            <person name="Meyer O."/>
        </authorList>
    </citation>
    <scope>NUCLEOTIDE SEQUENCE [LARGE SCALE GENOMIC DNA]</scope>
    <source>
        <strain>ATCC 49405 / DSM 1227 / KCTC 32145 / OM5</strain>
    </source>
</reference>
<sequence>MRVYYDRDADLNLIKGKKVAVVGYGSQGHAHALNLKDSGVKDVAIALRKGSSSAKKAEGAGFKVMDVAEAAKWADVVMMLTPDELQADIYRDHLHDNMKKGAALLFAHGLNVHFNLIEPREDLDVLMVAPKGPGHTVRGEYQRGGGVPCLLAIHKDSSGNAHDLGLSYGSAIGGGRAGIIETSFREETETDLFGEQAVLCGGTVELIRAGFETLVEAGYAPEMAYFECLHEMKLIVDLIYEGGIANMNYSISNTAEYGEYVSGPRVITAETKAEMKRILGDIQSGRFARDWMLENKVNQSSFKATRARNNKHQIEEVGARLRDMMPWIKKGALVDKSKN</sequence>
<evidence type="ECO:0000255" key="1">
    <source>
        <dbReference type="HAMAP-Rule" id="MF_00435"/>
    </source>
</evidence>
<evidence type="ECO:0000255" key="2">
    <source>
        <dbReference type="PROSITE-ProRule" id="PRU01197"/>
    </source>
</evidence>
<evidence type="ECO:0000255" key="3">
    <source>
        <dbReference type="PROSITE-ProRule" id="PRU01198"/>
    </source>
</evidence>
<keyword id="KW-0028">Amino-acid biosynthesis</keyword>
<keyword id="KW-0100">Branched-chain amino acid biosynthesis</keyword>
<keyword id="KW-0460">Magnesium</keyword>
<keyword id="KW-0479">Metal-binding</keyword>
<keyword id="KW-0521">NADP</keyword>
<keyword id="KW-0560">Oxidoreductase</keyword>
<keyword id="KW-1185">Reference proteome</keyword>
<comment type="function">
    <text evidence="1">Involved in the biosynthesis of branched-chain amino acids (BCAA). Catalyzes an alkyl-migration followed by a ketol-acid reduction of (S)-2-acetolactate (S2AL) to yield (R)-2,3-dihydroxy-isovalerate. In the isomerase reaction, S2AL is rearranged via a Mg-dependent methyl migration to produce 3-hydroxy-3-methyl-2-ketobutyrate (HMKB). In the reductase reaction, this 2-ketoacid undergoes a metal-dependent reduction by NADPH to yield (R)-2,3-dihydroxy-isovalerate.</text>
</comment>
<comment type="catalytic activity">
    <reaction evidence="1">
        <text>(2R)-2,3-dihydroxy-3-methylbutanoate + NADP(+) = (2S)-2-acetolactate + NADPH + H(+)</text>
        <dbReference type="Rhea" id="RHEA:22068"/>
        <dbReference type="ChEBI" id="CHEBI:15378"/>
        <dbReference type="ChEBI" id="CHEBI:49072"/>
        <dbReference type="ChEBI" id="CHEBI:57783"/>
        <dbReference type="ChEBI" id="CHEBI:58349"/>
        <dbReference type="ChEBI" id="CHEBI:58476"/>
        <dbReference type="EC" id="1.1.1.86"/>
    </reaction>
</comment>
<comment type="catalytic activity">
    <reaction evidence="1">
        <text>(2R,3R)-2,3-dihydroxy-3-methylpentanoate + NADP(+) = (S)-2-ethyl-2-hydroxy-3-oxobutanoate + NADPH + H(+)</text>
        <dbReference type="Rhea" id="RHEA:13493"/>
        <dbReference type="ChEBI" id="CHEBI:15378"/>
        <dbReference type="ChEBI" id="CHEBI:49256"/>
        <dbReference type="ChEBI" id="CHEBI:49258"/>
        <dbReference type="ChEBI" id="CHEBI:57783"/>
        <dbReference type="ChEBI" id="CHEBI:58349"/>
        <dbReference type="EC" id="1.1.1.86"/>
    </reaction>
</comment>
<comment type="cofactor">
    <cofactor evidence="1">
        <name>Mg(2+)</name>
        <dbReference type="ChEBI" id="CHEBI:18420"/>
    </cofactor>
    <text evidence="1">Binds 2 magnesium ions per subunit.</text>
</comment>
<comment type="pathway">
    <text evidence="1">Amino-acid biosynthesis; L-isoleucine biosynthesis; L-isoleucine from 2-oxobutanoate: step 2/4.</text>
</comment>
<comment type="pathway">
    <text evidence="1">Amino-acid biosynthesis; L-valine biosynthesis; L-valine from pyruvate: step 2/4.</text>
</comment>
<comment type="similarity">
    <text evidence="1">Belongs to the ketol-acid reductoisomerase family.</text>
</comment>
<gene>
    <name evidence="1" type="primary">ilvC</name>
    <name type="ordered locus">OCAR_5292</name>
    <name type="ordered locus">OCA5_c26820</name>
</gene>
<accession>B6JB83</accession>
<accession>F8BUL9</accession>
<organism>
    <name type="scientific">Afipia carboxidovorans (strain ATCC 49405 / DSM 1227 / KCTC 32145 / OM5)</name>
    <name type="common">Oligotropha carboxidovorans</name>
    <dbReference type="NCBI Taxonomy" id="504832"/>
    <lineage>
        <taxon>Bacteria</taxon>
        <taxon>Pseudomonadati</taxon>
        <taxon>Pseudomonadota</taxon>
        <taxon>Alphaproteobacteria</taxon>
        <taxon>Hyphomicrobiales</taxon>
        <taxon>Nitrobacteraceae</taxon>
        <taxon>Afipia</taxon>
    </lineage>
</organism>
<protein>
    <recommendedName>
        <fullName evidence="1">Ketol-acid reductoisomerase (NADP(+))</fullName>
        <shortName evidence="1">KARI</shortName>
        <ecNumber evidence="1">1.1.1.86</ecNumber>
    </recommendedName>
    <alternativeName>
        <fullName evidence="1">Acetohydroxy-acid isomeroreductase</fullName>
        <shortName evidence="1">AHIR</shortName>
    </alternativeName>
    <alternativeName>
        <fullName evidence="1">Alpha-keto-beta-hydroxylacyl reductoisomerase</fullName>
    </alternativeName>
    <alternativeName>
        <fullName evidence="1">Ketol-acid reductoisomerase type 1</fullName>
    </alternativeName>
    <alternativeName>
        <fullName evidence="1">Ketol-acid reductoisomerase type I</fullName>
    </alternativeName>
</protein>
<dbReference type="EC" id="1.1.1.86" evidence="1"/>
<dbReference type="EMBL" id="CP001196">
    <property type="protein sequence ID" value="ACI92424.1"/>
    <property type="molecule type" value="Genomic_DNA"/>
</dbReference>
<dbReference type="EMBL" id="CP002826">
    <property type="protein sequence ID" value="AEI07376.1"/>
    <property type="molecule type" value="Genomic_DNA"/>
</dbReference>
<dbReference type="RefSeq" id="WP_012562453.1">
    <property type="nucleotide sequence ID" value="NC_015684.1"/>
</dbReference>
<dbReference type="SMR" id="B6JB83"/>
<dbReference type="STRING" id="504832.OCA5_c26820"/>
<dbReference type="KEGG" id="oca:OCAR_5292"/>
<dbReference type="KEGG" id="ocg:OCA5_c26820"/>
<dbReference type="PATRIC" id="fig|504832.7.peg.2833"/>
<dbReference type="eggNOG" id="COG0059">
    <property type="taxonomic scope" value="Bacteria"/>
</dbReference>
<dbReference type="HOGENOM" id="CLU_033821_0_1_5"/>
<dbReference type="OrthoDB" id="9804088at2"/>
<dbReference type="UniPathway" id="UPA00047">
    <property type="reaction ID" value="UER00056"/>
</dbReference>
<dbReference type="UniPathway" id="UPA00049">
    <property type="reaction ID" value="UER00060"/>
</dbReference>
<dbReference type="Proteomes" id="UP000007730">
    <property type="component" value="Chromosome"/>
</dbReference>
<dbReference type="GO" id="GO:0005829">
    <property type="term" value="C:cytosol"/>
    <property type="evidence" value="ECO:0007669"/>
    <property type="project" value="TreeGrafter"/>
</dbReference>
<dbReference type="GO" id="GO:0004455">
    <property type="term" value="F:ketol-acid reductoisomerase activity"/>
    <property type="evidence" value="ECO:0007669"/>
    <property type="project" value="UniProtKB-UniRule"/>
</dbReference>
<dbReference type="GO" id="GO:0000287">
    <property type="term" value="F:magnesium ion binding"/>
    <property type="evidence" value="ECO:0007669"/>
    <property type="project" value="UniProtKB-UniRule"/>
</dbReference>
<dbReference type="GO" id="GO:0050661">
    <property type="term" value="F:NADP binding"/>
    <property type="evidence" value="ECO:0007669"/>
    <property type="project" value="InterPro"/>
</dbReference>
<dbReference type="GO" id="GO:0009097">
    <property type="term" value="P:isoleucine biosynthetic process"/>
    <property type="evidence" value="ECO:0007669"/>
    <property type="project" value="UniProtKB-UniRule"/>
</dbReference>
<dbReference type="GO" id="GO:0009099">
    <property type="term" value="P:L-valine biosynthetic process"/>
    <property type="evidence" value="ECO:0007669"/>
    <property type="project" value="UniProtKB-UniRule"/>
</dbReference>
<dbReference type="FunFam" id="3.40.50.720:FF:000023">
    <property type="entry name" value="Ketol-acid reductoisomerase (NADP(+))"/>
    <property type="match status" value="1"/>
</dbReference>
<dbReference type="Gene3D" id="6.10.240.10">
    <property type="match status" value="1"/>
</dbReference>
<dbReference type="Gene3D" id="3.40.50.720">
    <property type="entry name" value="NAD(P)-binding Rossmann-like Domain"/>
    <property type="match status" value="1"/>
</dbReference>
<dbReference type="HAMAP" id="MF_00435">
    <property type="entry name" value="IlvC"/>
    <property type="match status" value="1"/>
</dbReference>
<dbReference type="InterPro" id="IPR008927">
    <property type="entry name" value="6-PGluconate_DH-like_C_sf"/>
</dbReference>
<dbReference type="InterPro" id="IPR013023">
    <property type="entry name" value="KARI"/>
</dbReference>
<dbReference type="InterPro" id="IPR000506">
    <property type="entry name" value="KARI_C"/>
</dbReference>
<dbReference type="InterPro" id="IPR013116">
    <property type="entry name" value="KARI_N"/>
</dbReference>
<dbReference type="InterPro" id="IPR014359">
    <property type="entry name" value="KARI_prok"/>
</dbReference>
<dbReference type="InterPro" id="IPR036291">
    <property type="entry name" value="NAD(P)-bd_dom_sf"/>
</dbReference>
<dbReference type="NCBIfam" id="TIGR00465">
    <property type="entry name" value="ilvC"/>
    <property type="match status" value="1"/>
</dbReference>
<dbReference type="NCBIfam" id="NF004017">
    <property type="entry name" value="PRK05479.1"/>
    <property type="match status" value="1"/>
</dbReference>
<dbReference type="NCBIfam" id="NF009940">
    <property type="entry name" value="PRK13403.1"/>
    <property type="match status" value="1"/>
</dbReference>
<dbReference type="PANTHER" id="PTHR21371">
    <property type="entry name" value="KETOL-ACID REDUCTOISOMERASE, MITOCHONDRIAL"/>
    <property type="match status" value="1"/>
</dbReference>
<dbReference type="PANTHER" id="PTHR21371:SF1">
    <property type="entry name" value="KETOL-ACID REDUCTOISOMERASE, MITOCHONDRIAL"/>
    <property type="match status" value="1"/>
</dbReference>
<dbReference type="Pfam" id="PF01450">
    <property type="entry name" value="KARI_C"/>
    <property type="match status" value="1"/>
</dbReference>
<dbReference type="Pfam" id="PF07991">
    <property type="entry name" value="KARI_N"/>
    <property type="match status" value="1"/>
</dbReference>
<dbReference type="PIRSF" id="PIRSF000116">
    <property type="entry name" value="IlvC_gammaproteo"/>
    <property type="match status" value="1"/>
</dbReference>
<dbReference type="SUPFAM" id="SSF48179">
    <property type="entry name" value="6-phosphogluconate dehydrogenase C-terminal domain-like"/>
    <property type="match status" value="1"/>
</dbReference>
<dbReference type="SUPFAM" id="SSF51735">
    <property type="entry name" value="NAD(P)-binding Rossmann-fold domains"/>
    <property type="match status" value="1"/>
</dbReference>
<dbReference type="PROSITE" id="PS51851">
    <property type="entry name" value="KARI_C"/>
    <property type="match status" value="1"/>
</dbReference>
<dbReference type="PROSITE" id="PS51850">
    <property type="entry name" value="KARI_N"/>
    <property type="match status" value="1"/>
</dbReference>